<reference key="1">
    <citation type="journal article" date="1998" name="Science">
        <title>Genome sequence of the nematode C. elegans: a platform for investigating biology.</title>
        <authorList>
            <consortium name="The C. elegans sequencing consortium"/>
        </authorList>
    </citation>
    <scope>NUCLEOTIDE SEQUENCE [LARGE SCALE GENOMIC DNA]</scope>
    <source>
        <strain>Bristol N2</strain>
    </source>
</reference>
<reference key="2">
    <citation type="journal article" date="2006" name="J. Cell Sci.">
        <title>IFTA-2 is a conserved cilia protein involved in pathways regulating longevity and dauer formation in Caenorhabditis elegans.</title>
        <authorList>
            <person name="Schafer J.C."/>
            <person name="Winkelbauer M.E."/>
            <person name="Williams C.L."/>
            <person name="Haycraft C.J."/>
            <person name="Desmond R.A."/>
            <person name="Yoder B.K."/>
        </authorList>
    </citation>
    <scope>DISRUPTION PHENOTYPE</scope>
    <scope>TISSUE SPECIFICITY</scope>
    <scope>SUBCELLULAR LOCATION</scope>
    <scope>FUNCTION</scope>
</reference>
<reference key="3">
    <citation type="journal article" date="2017" name="Curr. Biol.">
        <title>Dynein-driven retrograde intraflagellar transport is triphasic in C. elegans sensory cilia.</title>
        <authorList>
            <person name="Yi P."/>
            <person name="Li W.J."/>
            <person name="Dong M.Q."/>
            <person name="Ou G."/>
        </authorList>
    </citation>
    <scope>FUNCTION</scope>
    <scope>IDENTIFICATION IN IFT COMPLEX B</scope>
    <scope>IDENTIFICATION BY MASS SPECTROMETRY</scope>
</reference>
<dbReference type="EMBL" id="Z82285">
    <property type="protein sequence ID" value="CAB05299.1"/>
    <property type="molecule type" value="Genomic_DNA"/>
</dbReference>
<dbReference type="PIR" id="T25422">
    <property type="entry name" value="T25422"/>
</dbReference>
<dbReference type="RefSeq" id="NP_503073.1">
    <property type="nucleotide sequence ID" value="NM_070672.4"/>
</dbReference>
<dbReference type="SMR" id="Q9XUC2"/>
<dbReference type="BioGRID" id="53706">
    <property type="interactions" value="6"/>
</dbReference>
<dbReference type="ComplexPortal" id="CPX-1290">
    <property type="entry name" value="Intraflagellar transport complex B"/>
</dbReference>
<dbReference type="FunCoup" id="Q9XUC2">
    <property type="interactions" value="638"/>
</dbReference>
<dbReference type="STRING" id="6239.T28F3.6.1"/>
<dbReference type="PaxDb" id="6239-T28F3.6"/>
<dbReference type="EnsemblMetazoa" id="T28F3.6.1">
    <property type="protein sequence ID" value="T28F3.6.1"/>
    <property type="gene ID" value="WBGene00012132"/>
</dbReference>
<dbReference type="GeneID" id="189055"/>
<dbReference type="KEGG" id="cel:CELE_T28F3.6"/>
<dbReference type="UCSC" id="T28F3.6">
    <property type="organism name" value="c. elegans"/>
</dbReference>
<dbReference type="AGR" id="WB:WBGene00012132"/>
<dbReference type="CTD" id="189055"/>
<dbReference type="WormBase" id="T28F3.6">
    <property type="protein sequence ID" value="CE20116"/>
    <property type="gene ID" value="WBGene00012132"/>
    <property type="gene designation" value="ifta-2"/>
</dbReference>
<dbReference type="eggNOG" id="ENOG502RXD4">
    <property type="taxonomic scope" value="Eukaryota"/>
</dbReference>
<dbReference type="HOGENOM" id="CLU_096604_0_0_1"/>
<dbReference type="InParanoid" id="Q9XUC2"/>
<dbReference type="OMA" id="PWYEEFV"/>
<dbReference type="OrthoDB" id="275177at2759"/>
<dbReference type="PhylomeDB" id="Q9XUC2"/>
<dbReference type="Reactome" id="R-CEL-5620924">
    <property type="pathway name" value="Intraflagellar transport"/>
</dbReference>
<dbReference type="PRO" id="PR:Q9XUC2"/>
<dbReference type="Proteomes" id="UP000001940">
    <property type="component" value="Chromosome IV"/>
</dbReference>
<dbReference type="Bgee" id="WBGene00012132">
    <property type="expression patterns" value="Expressed in pharyngeal muscle cell (C elegans) and 3 other cell types or tissues"/>
</dbReference>
<dbReference type="GO" id="GO:0005930">
    <property type="term" value="C:axoneme"/>
    <property type="evidence" value="ECO:0000314"/>
    <property type="project" value="WormBase"/>
</dbReference>
<dbReference type="GO" id="GO:0097546">
    <property type="term" value="C:ciliary base"/>
    <property type="evidence" value="ECO:0000314"/>
    <property type="project" value="WormBase"/>
</dbReference>
<dbReference type="GO" id="GO:0005929">
    <property type="term" value="C:cilium"/>
    <property type="evidence" value="ECO:0000303"/>
    <property type="project" value="ComplexPortal"/>
</dbReference>
<dbReference type="GO" id="GO:0012505">
    <property type="term" value="C:endomembrane system"/>
    <property type="evidence" value="ECO:0000318"/>
    <property type="project" value="GO_Central"/>
</dbReference>
<dbReference type="GO" id="GO:0030992">
    <property type="term" value="C:intraciliary transport particle B"/>
    <property type="evidence" value="ECO:0000303"/>
    <property type="project" value="ComplexPortal"/>
</dbReference>
<dbReference type="GO" id="GO:0005525">
    <property type="term" value="F:GTP binding"/>
    <property type="evidence" value="ECO:0007669"/>
    <property type="project" value="UniProtKB-KW"/>
</dbReference>
<dbReference type="GO" id="GO:0003924">
    <property type="term" value="F:GTPase activity"/>
    <property type="evidence" value="ECO:0000318"/>
    <property type="project" value="GO_Central"/>
</dbReference>
<dbReference type="GO" id="GO:0060271">
    <property type="term" value="P:cilium assembly"/>
    <property type="evidence" value="ECO:0000303"/>
    <property type="project" value="ComplexPortal"/>
</dbReference>
<dbReference type="GO" id="GO:0040024">
    <property type="term" value="P:dauer larval development"/>
    <property type="evidence" value="ECO:0000315"/>
    <property type="project" value="WormBase"/>
</dbReference>
<dbReference type="GO" id="GO:0008340">
    <property type="term" value="P:determination of adult lifespan"/>
    <property type="evidence" value="ECO:0000315"/>
    <property type="project" value="WormBase"/>
</dbReference>
<dbReference type="GO" id="GO:0048009">
    <property type="term" value="P:insulin-like growth factor receptor signaling pathway"/>
    <property type="evidence" value="ECO:0000316"/>
    <property type="project" value="WormBase"/>
</dbReference>
<dbReference type="GO" id="GO:0006886">
    <property type="term" value="P:intracellular protein transport"/>
    <property type="evidence" value="ECO:0000318"/>
    <property type="project" value="GO_Central"/>
</dbReference>
<dbReference type="GO" id="GO:0042073">
    <property type="term" value="P:intraciliary transport"/>
    <property type="evidence" value="ECO:0000303"/>
    <property type="project" value="ComplexPortal"/>
</dbReference>
<dbReference type="GO" id="GO:0008104">
    <property type="term" value="P:protein localization"/>
    <property type="evidence" value="ECO:0000315"/>
    <property type="project" value="WormBase"/>
</dbReference>
<dbReference type="Gene3D" id="3.40.50.300">
    <property type="entry name" value="P-loop containing nucleotide triphosphate hydrolases"/>
    <property type="match status" value="1"/>
</dbReference>
<dbReference type="InterPro" id="IPR027417">
    <property type="entry name" value="P-loop_NTPase"/>
</dbReference>
<dbReference type="PANTHER" id="PTHR24073">
    <property type="entry name" value="DRAB5-RELATED"/>
    <property type="match status" value="1"/>
</dbReference>
<dbReference type="Pfam" id="PF08477">
    <property type="entry name" value="Roc"/>
    <property type="match status" value="1"/>
</dbReference>
<dbReference type="SUPFAM" id="SSF52540">
    <property type="entry name" value="P-loop containing nucleoside triphosphate hydrolases"/>
    <property type="match status" value="1"/>
</dbReference>
<sequence>MATENPQTWALWLILSEMASDMQEDKKVAKILVLGPPKAGKTTLCTFLADFMEDGDTLKKGEDSGERERKFEFEFTSVYRPTKGVRIQEFETHEFFTEQEQNELGGTRRLEDSEIQLWDVSGDKKYEDCWPAIKENAEGVILVVNPEEHKGSDLQQWFYEFVEKENIDLSCVMVILNEQGAKKTNHEQISGFEILPKLRGVHHVAHHFGSEAMQVKMEVNSFMASVLKMDQRQMGSGVDHGLGYADEQEDDF</sequence>
<proteinExistence type="evidence at protein level"/>
<comment type="function">
    <text evidence="2 3">Component of the intraflagellar transport (IFT) complex B required for transport of proteins in the motile cilium (PubMed:28479320). May be required for ciliary entrance and transport of specific ciliary cargo proteins such as che-3 which are related to motility (PubMed:28479320). Regulates specific signaling activities in the cilia, such as the daf-2/insulin receptor-like transduction pathway (PubMed:16968739).</text>
</comment>
<comment type="subunit">
    <text evidence="3">Component of the IFT complex B composed of at least che-2, che-13, dyf-1, dyf-3, dyf-6, dyf-11, dyf-13, ift-20, ift-74, ift-81, ifta-2, osm-1, osm-5 and osm-6.</text>
</comment>
<comment type="subcellular location">
    <subcellularLocation>
        <location evidence="2">Cytoplasm</location>
        <location evidence="2">Cytoskeleton</location>
        <location evidence="2">Cilium axoneme</location>
    </subcellularLocation>
    <text>Moves along the axoneme.</text>
</comment>
<comment type="tissue specificity">
    <text evidence="2">Ciliated sensory neurons.</text>
</comment>
<comment type="disruption phenotype">
    <text evidence="2">Worms have an extended lifespan phenotype and are defective in dauer formation.</text>
</comment>
<comment type="similarity">
    <text evidence="4">Belongs to the small GTPase superfamily. Rab family.</text>
</comment>
<comment type="caution">
    <text evidence="4">In contrast to other members of the family, does not contain a prenylation domain.</text>
</comment>
<evidence type="ECO:0000250" key="1"/>
<evidence type="ECO:0000269" key="2">
    <source>
    </source>
</evidence>
<evidence type="ECO:0000269" key="3">
    <source>
    </source>
</evidence>
<evidence type="ECO:0000305" key="4"/>
<evidence type="ECO:0000312" key="5">
    <source>
        <dbReference type="WormBase" id="T28F3.6"/>
    </source>
</evidence>
<organism>
    <name type="scientific">Caenorhabditis elegans</name>
    <dbReference type="NCBI Taxonomy" id="6239"/>
    <lineage>
        <taxon>Eukaryota</taxon>
        <taxon>Metazoa</taxon>
        <taxon>Ecdysozoa</taxon>
        <taxon>Nematoda</taxon>
        <taxon>Chromadorea</taxon>
        <taxon>Rhabditida</taxon>
        <taxon>Rhabditina</taxon>
        <taxon>Rhabditomorpha</taxon>
        <taxon>Rhabditoidea</taxon>
        <taxon>Rhabditidae</taxon>
        <taxon>Peloderinae</taxon>
        <taxon>Caenorhabditis</taxon>
    </lineage>
</organism>
<feature type="chain" id="PRO_0000429419" description="Intraflagellar transport associated protein 2">
    <location>
        <begin position="1"/>
        <end position="252"/>
    </location>
</feature>
<feature type="binding site" evidence="1">
    <location>
        <begin position="35"/>
        <end position="42"/>
    </location>
    <ligand>
        <name>GTP</name>
        <dbReference type="ChEBI" id="CHEBI:37565"/>
    </ligand>
</feature>
<feature type="binding site" evidence="1">
    <location>
        <begin position="118"/>
        <end position="125"/>
    </location>
    <ligand>
        <name>GTP</name>
        <dbReference type="ChEBI" id="CHEBI:37565"/>
    </ligand>
</feature>
<name>IFT22_CAEEL</name>
<gene>
    <name evidence="5" type="primary">ifta-2</name>
    <name evidence="5" type="ORF">T28F3.6</name>
</gene>
<accession>Q9XUC2</accession>
<protein>
    <recommendedName>
        <fullName>Intraflagellar transport associated protein 2</fullName>
    </recommendedName>
</protein>
<keyword id="KW-0966">Cell projection</keyword>
<keyword id="KW-0969">Cilium</keyword>
<keyword id="KW-0963">Cytoplasm</keyword>
<keyword id="KW-0206">Cytoskeleton</keyword>
<keyword id="KW-0342">GTP-binding</keyword>
<keyword id="KW-0547">Nucleotide-binding</keyword>
<keyword id="KW-1185">Reference proteome</keyword>